<name>TRPF_ENDTX</name>
<organism>
    <name type="scientific">Endomicrobium trichonymphae</name>
    <dbReference type="NCBI Taxonomy" id="1408204"/>
    <lineage>
        <taxon>Bacteria</taxon>
        <taxon>Pseudomonadati</taxon>
        <taxon>Elusimicrobiota</taxon>
        <taxon>Endomicrobiia</taxon>
        <taxon>Endomicrobiales</taxon>
        <taxon>Endomicrobiaceae</taxon>
        <taxon>Candidatus Endomicrobiellum</taxon>
    </lineage>
</organism>
<comment type="catalytic activity">
    <reaction evidence="1">
        <text>N-(5-phospho-beta-D-ribosyl)anthranilate = 1-(2-carboxyphenylamino)-1-deoxy-D-ribulose 5-phosphate</text>
        <dbReference type="Rhea" id="RHEA:21540"/>
        <dbReference type="ChEBI" id="CHEBI:18277"/>
        <dbReference type="ChEBI" id="CHEBI:58613"/>
        <dbReference type="EC" id="5.3.1.24"/>
    </reaction>
</comment>
<comment type="pathway">
    <text evidence="1">Amino-acid biosynthesis; L-tryptophan biosynthesis; L-tryptophan from chorismate: step 3/5.</text>
</comment>
<comment type="similarity">
    <text evidence="1">Belongs to the TrpF family.</text>
</comment>
<evidence type="ECO:0000255" key="1">
    <source>
        <dbReference type="HAMAP-Rule" id="MF_00135"/>
    </source>
</evidence>
<proteinExistence type="inferred from homology"/>
<protein>
    <recommendedName>
        <fullName evidence="1">N-(5'-phosphoribosyl)anthranilate isomerase</fullName>
        <shortName evidence="1">PRAI</shortName>
        <ecNumber evidence="1">5.3.1.24</ecNumber>
    </recommendedName>
</protein>
<accession>B1GZC1</accession>
<gene>
    <name evidence="1" type="primary">trpF</name>
    <name type="ordered locus">TGRD_120</name>
</gene>
<feature type="chain" id="PRO_1000095949" description="N-(5'-phosphoribosyl)anthranilate isomerase">
    <location>
        <begin position="1"/>
        <end position="200"/>
    </location>
</feature>
<dbReference type="EC" id="5.3.1.24" evidence="1"/>
<dbReference type="EMBL" id="AP009510">
    <property type="protein sequence ID" value="BAG13603.1"/>
    <property type="molecule type" value="Genomic_DNA"/>
</dbReference>
<dbReference type="RefSeq" id="WP_015423132.1">
    <property type="nucleotide sequence ID" value="NC_020419.1"/>
</dbReference>
<dbReference type="SMR" id="B1GZC1"/>
<dbReference type="STRING" id="471821.TGRD_120"/>
<dbReference type="KEGG" id="rsd:TGRD_120"/>
<dbReference type="PATRIC" id="fig|471821.5.peg.169"/>
<dbReference type="HOGENOM" id="CLU_076364_1_0_0"/>
<dbReference type="UniPathway" id="UPA00035">
    <property type="reaction ID" value="UER00042"/>
</dbReference>
<dbReference type="Proteomes" id="UP000001691">
    <property type="component" value="Chromosome"/>
</dbReference>
<dbReference type="GO" id="GO:0004640">
    <property type="term" value="F:phosphoribosylanthranilate isomerase activity"/>
    <property type="evidence" value="ECO:0007669"/>
    <property type="project" value="UniProtKB-UniRule"/>
</dbReference>
<dbReference type="GO" id="GO:0000162">
    <property type="term" value="P:L-tryptophan biosynthetic process"/>
    <property type="evidence" value="ECO:0007669"/>
    <property type="project" value="UniProtKB-UniRule"/>
</dbReference>
<dbReference type="CDD" id="cd00405">
    <property type="entry name" value="PRAI"/>
    <property type="match status" value="1"/>
</dbReference>
<dbReference type="Gene3D" id="3.20.20.70">
    <property type="entry name" value="Aldolase class I"/>
    <property type="match status" value="1"/>
</dbReference>
<dbReference type="HAMAP" id="MF_00135">
    <property type="entry name" value="PRAI"/>
    <property type="match status" value="1"/>
</dbReference>
<dbReference type="InterPro" id="IPR013785">
    <property type="entry name" value="Aldolase_TIM"/>
</dbReference>
<dbReference type="InterPro" id="IPR001240">
    <property type="entry name" value="PRAI_dom"/>
</dbReference>
<dbReference type="InterPro" id="IPR011060">
    <property type="entry name" value="RibuloseP-bd_barrel"/>
</dbReference>
<dbReference type="InterPro" id="IPR044643">
    <property type="entry name" value="TrpF_fam"/>
</dbReference>
<dbReference type="PANTHER" id="PTHR42894">
    <property type="entry name" value="N-(5'-PHOSPHORIBOSYL)ANTHRANILATE ISOMERASE"/>
    <property type="match status" value="1"/>
</dbReference>
<dbReference type="PANTHER" id="PTHR42894:SF1">
    <property type="entry name" value="N-(5'-PHOSPHORIBOSYL)ANTHRANILATE ISOMERASE"/>
    <property type="match status" value="1"/>
</dbReference>
<dbReference type="Pfam" id="PF00697">
    <property type="entry name" value="PRAI"/>
    <property type="match status" value="1"/>
</dbReference>
<dbReference type="SUPFAM" id="SSF51366">
    <property type="entry name" value="Ribulose-phoshate binding barrel"/>
    <property type="match status" value="1"/>
</dbReference>
<sequence length="200" mass="22540">MPKIKICGLKREEDVSFVNIAKPDYAGFVFAGVKRKIDFNTAVRFRSLLDDTIQSVGVFVNDKIDNIVNLCEDKTIDLVQLHGGEDESYIGRLKERIKKPVVKAVRVKDKIYSAATKADFMLFDTYSSFEYGGSGKIFDWDLLKEFRNPFFLAGGLNRDNIAEAVKKLNPYCVDLSSGVETNGVKDLNKIIETVKILRSL</sequence>
<reference key="1">
    <citation type="journal article" date="2008" name="Proc. Natl. Acad. Sci. U.S.A.">
        <title>Complete genome of the uncultured termite group 1 bacteria in a single host protist cell.</title>
        <authorList>
            <person name="Hongoh Y."/>
            <person name="Sharma V.K."/>
            <person name="Prakash T."/>
            <person name="Noda S."/>
            <person name="Taylor T.D."/>
            <person name="Kudo T."/>
            <person name="Sakaki Y."/>
            <person name="Toyoda A."/>
            <person name="Hattori M."/>
            <person name="Ohkuma M."/>
        </authorList>
    </citation>
    <scope>NUCLEOTIDE SEQUENCE [LARGE SCALE GENOMIC DNA]</scope>
</reference>
<keyword id="KW-0028">Amino-acid biosynthesis</keyword>
<keyword id="KW-0057">Aromatic amino acid biosynthesis</keyword>
<keyword id="KW-0413">Isomerase</keyword>
<keyword id="KW-0822">Tryptophan biosynthesis</keyword>